<keyword id="KW-0963">Cytoplasm</keyword>
<keyword id="KW-0238">DNA-binding</keyword>
<keyword id="KW-1185">Reference proteome</keyword>
<keyword id="KW-0804">Transcription</keyword>
<keyword id="KW-0805">Transcription regulation</keyword>
<reference key="1">
    <citation type="submission" date="2009-01" db="EMBL/GenBank/DDBJ databases">
        <title>Complete sequence of chromosome of Methylobacterium nodulans ORS 2060.</title>
        <authorList>
            <consortium name="US DOE Joint Genome Institute"/>
            <person name="Lucas S."/>
            <person name="Copeland A."/>
            <person name="Lapidus A."/>
            <person name="Glavina del Rio T."/>
            <person name="Dalin E."/>
            <person name="Tice H."/>
            <person name="Bruce D."/>
            <person name="Goodwin L."/>
            <person name="Pitluck S."/>
            <person name="Sims D."/>
            <person name="Brettin T."/>
            <person name="Detter J.C."/>
            <person name="Han C."/>
            <person name="Larimer F."/>
            <person name="Land M."/>
            <person name="Hauser L."/>
            <person name="Kyrpides N."/>
            <person name="Ivanova N."/>
            <person name="Marx C.J."/>
            <person name="Richardson P."/>
        </authorList>
    </citation>
    <scope>NUCLEOTIDE SEQUENCE [LARGE SCALE GENOMIC DNA]</scope>
    <source>
        <strain>LMG 21967 / CNCM I-2342 / ORS 2060</strain>
    </source>
</reference>
<dbReference type="EMBL" id="CP001349">
    <property type="protein sequence ID" value="ACL62138.1"/>
    <property type="molecule type" value="Genomic_DNA"/>
</dbReference>
<dbReference type="RefSeq" id="WP_015933696.1">
    <property type="nucleotide sequence ID" value="NC_011894.1"/>
</dbReference>
<dbReference type="SMR" id="B8IN22"/>
<dbReference type="STRING" id="460265.Mnod_7401"/>
<dbReference type="KEGG" id="mno:Mnod_7401"/>
<dbReference type="eggNOG" id="COG0217">
    <property type="taxonomic scope" value="Bacteria"/>
</dbReference>
<dbReference type="HOGENOM" id="CLU_062974_2_2_5"/>
<dbReference type="OrthoDB" id="9781053at2"/>
<dbReference type="Proteomes" id="UP000008207">
    <property type="component" value="Chromosome"/>
</dbReference>
<dbReference type="GO" id="GO:0005829">
    <property type="term" value="C:cytosol"/>
    <property type="evidence" value="ECO:0007669"/>
    <property type="project" value="TreeGrafter"/>
</dbReference>
<dbReference type="GO" id="GO:0003677">
    <property type="term" value="F:DNA binding"/>
    <property type="evidence" value="ECO:0007669"/>
    <property type="project" value="UniProtKB-UniRule"/>
</dbReference>
<dbReference type="GO" id="GO:0006355">
    <property type="term" value="P:regulation of DNA-templated transcription"/>
    <property type="evidence" value="ECO:0007669"/>
    <property type="project" value="UniProtKB-UniRule"/>
</dbReference>
<dbReference type="FunFam" id="1.10.10.200:FF:000002">
    <property type="entry name" value="Probable transcriptional regulatory protein CLM62_37755"/>
    <property type="match status" value="1"/>
</dbReference>
<dbReference type="Gene3D" id="1.10.10.200">
    <property type="match status" value="1"/>
</dbReference>
<dbReference type="Gene3D" id="3.30.70.980">
    <property type="match status" value="2"/>
</dbReference>
<dbReference type="HAMAP" id="MF_00693">
    <property type="entry name" value="Transcrip_reg_TACO1"/>
    <property type="match status" value="1"/>
</dbReference>
<dbReference type="InterPro" id="IPR017856">
    <property type="entry name" value="Integrase-like_N"/>
</dbReference>
<dbReference type="InterPro" id="IPR048300">
    <property type="entry name" value="TACO1_YebC-like_2nd/3rd_dom"/>
</dbReference>
<dbReference type="InterPro" id="IPR049083">
    <property type="entry name" value="TACO1_YebC_N"/>
</dbReference>
<dbReference type="InterPro" id="IPR002876">
    <property type="entry name" value="Transcrip_reg_TACO1-like"/>
</dbReference>
<dbReference type="InterPro" id="IPR026564">
    <property type="entry name" value="Transcrip_reg_TACO1-like_dom3"/>
</dbReference>
<dbReference type="InterPro" id="IPR029072">
    <property type="entry name" value="YebC-like"/>
</dbReference>
<dbReference type="NCBIfam" id="NF001030">
    <property type="entry name" value="PRK00110.1"/>
    <property type="match status" value="1"/>
</dbReference>
<dbReference type="NCBIfam" id="NF009044">
    <property type="entry name" value="PRK12378.1"/>
    <property type="match status" value="1"/>
</dbReference>
<dbReference type="NCBIfam" id="TIGR01033">
    <property type="entry name" value="YebC/PmpR family DNA-binding transcriptional regulator"/>
    <property type="match status" value="1"/>
</dbReference>
<dbReference type="PANTHER" id="PTHR12532:SF6">
    <property type="entry name" value="TRANSCRIPTIONAL REGULATORY PROTEIN YEBC-RELATED"/>
    <property type="match status" value="1"/>
</dbReference>
<dbReference type="PANTHER" id="PTHR12532">
    <property type="entry name" value="TRANSLATIONAL ACTIVATOR OF CYTOCHROME C OXIDASE 1"/>
    <property type="match status" value="1"/>
</dbReference>
<dbReference type="Pfam" id="PF20772">
    <property type="entry name" value="TACO1_YebC_N"/>
    <property type="match status" value="1"/>
</dbReference>
<dbReference type="Pfam" id="PF01709">
    <property type="entry name" value="Transcrip_reg"/>
    <property type="match status" value="1"/>
</dbReference>
<dbReference type="SUPFAM" id="SSF75625">
    <property type="entry name" value="YebC-like"/>
    <property type="match status" value="1"/>
</dbReference>
<name>Y7401_METNO</name>
<accession>B8IN22</accession>
<proteinExistence type="inferred from homology"/>
<sequence length="248" mass="26828">MAGHSQFKNIMHRKGRVDAVRSKVFGKLAREITVAAKLGTPDPAMNPRLRAAVLAARAENMPKDNIERAIKKACGGDAETYEEIRYEGYGPGGAALIVEAQTDNRNRTASDVRSAFTKAGGSLAETGAVSFMFDRVGLVAFDAKVADADTMLEAAIEAGADDVKSDESGHEVTCEQSALGEVAKALEARFGEPRRTSLVWRPQNTVEVDDETGEKLIRLVEMIEDQDDVQNVFVNFAVSDALMAKLHD</sequence>
<feature type="chain" id="PRO_1000200100" description="Probable transcriptional regulatory protein Mnod_7401">
    <location>
        <begin position="1"/>
        <end position="248"/>
    </location>
</feature>
<gene>
    <name type="ordered locus">Mnod_7401</name>
</gene>
<protein>
    <recommendedName>
        <fullName evidence="1">Probable transcriptional regulatory protein Mnod_7401</fullName>
    </recommendedName>
</protein>
<organism>
    <name type="scientific">Methylobacterium nodulans (strain LMG 21967 / CNCM I-2342 / ORS 2060)</name>
    <dbReference type="NCBI Taxonomy" id="460265"/>
    <lineage>
        <taxon>Bacteria</taxon>
        <taxon>Pseudomonadati</taxon>
        <taxon>Pseudomonadota</taxon>
        <taxon>Alphaproteobacteria</taxon>
        <taxon>Hyphomicrobiales</taxon>
        <taxon>Methylobacteriaceae</taxon>
        <taxon>Methylobacterium</taxon>
    </lineage>
</organism>
<comment type="subcellular location">
    <subcellularLocation>
        <location evidence="1">Cytoplasm</location>
    </subcellularLocation>
</comment>
<comment type="similarity">
    <text evidence="1">Belongs to the TACO1 family.</text>
</comment>
<evidence type="ECO:0000255" key="1">
    <source>
        <dbReference type="HAMAP-Rule" id="MF_00693"/>
    </source>
</evidence>